<accession>P9WGT0</accession>
<accession>L0TB81</accession>
<accession>P69167</accession>
<accession>Q10855</accession>
<reference key="1">
    <citation type="journal article" date="2002" name="J. Bacteriol.">
        <title>Whole-genome comparison of Mycobacterium tuberculosis clinical and laboratory strains.</title>
        <authorList>
            <person name="Fleischmann R.D."/>
            <person name="Alland D."/>
            <person name="Eisen J.A."/>
            <person name="Carpenter L."/>
            <person name="White O."/>
            <person name="Peterson J.D."/>
            <person name="DeBoy R.T."/>
            <person name="Dodson R.J."/>
            <person name="Gwinn M.L."/>
            <person name="Haft D.H."/>
            <person name="Hickey E.K."/>
            <person name="Kolonay J.F."/>
            <person name="Nelson W.C."/>
            <person name="Umayam L.A."/>
            <person name="Ermolaeva M.D."/>
            <person name="Salzberg S.L."/>
            <person name="Delcher A."/>
            <person name="Utterback T.R."/>
            <person name="Weidman J.F."/>
            <person name="Khouri H.M."/>
            <person name="Gill J."/>
            <person name="Mikula A."/>
            <person name="Bishai W."/>
            <person name="Jacobs W.R. Jr."/>
            <person name="Venter J.C."/>
            <person name="Fraser C.M."/>
        </authorList>
    </citation>
    <scope>NUCLEOTIDE SEQUENCE [LARGE SCALE GENOMIC DNA]</scope>
    <source>
        <strain>CDC 1551 / Oshkosh</strain>
    </source>
</reference>
<dbReference type="EC" id="1.1.1.53" evidence="1"/>
<dbReference type="EMBL" id="AE000516">
    <property type="protein sequence ID" value="AAK46335.1"/>
    <property type="molecule type" value="Genomic_DNA"/>
</dbReference>
<dbReference type="PIR" id="H70758">
    <property type="entry name" value="H70758"/>
</dbReference>
<dbReference type="RefSeq" id="WP_003899124.1">
    <property type="nucleotide sequence ID" value="NZ_KK341227.1"/>
</dbReference>
<dbReference type="SMR" id="P9WGT0"/>
<dbReference type="KEGG" id="mtc:MT2058"/>
<dbReference type="PATRIC" id="fig|83331.31.peg.2215"/>
<dbReference type="HOGENOM" id="CLU_010194_1_0_11"/>
<dbReference type="UniPathway" id="UPA00722"/>
<dbReference type="Proteomes" id="UP000001020">
    <property type="component" value="Chromosome"/>
</dbReference>
<dbReference type="GO" id="GO:0047044">
    <property type="term" value="F:androstan-3-alpha,17-beta-diol dehydrogenase (NAD+) activity"/>
    <property type="evidence" value="ECO:0007669"/>
    <property type="project" value="UniProtKB-EC"/>
</dbReference>
<dbReference type="GO" id="GO:0006706">
    <property type="term" value="P:steroid catabolic process"/>
    <property type="evidence" value="ECO:0007669"/>
    <property type="project" value="UniProtKB-UniPathway"/>
</dbReference>
<dbReference type="CDD" id="cd05341">
    <property type="entry name" value="3beta-17beta-HSD_like_SDR_c"/>
    <property type="match status" value="1"/>
</dbReference>
<dbReference type="FunFam" id="3.40.50.720:FF:000084">
    <property type="entry name" value="Short-chain dehydrogenase reductase"/>
    <property type="match status" value="1"/>
</dbReference>
<dbReference type="Gene3D" id="3.40.50.720">
    <property type="entry name" value="NAD(P)-binding Rossmann-like Domain"/>
    <property type="match status" value="1"/>
</dbReference>
<dbReference type="InterPro" id="IPR036291">
    <property type="entry name" value="NAD(P)-bd_dom_sf"/>
</dbReference>
<dbReference type="InterPro" id="IPR020904">
    <property type="entry name" value="Sc_DH/Rdtase_CS"/>
</dbReference>
<dbReference type="InterPro" id="IPR002347">
    <property type="entry name" value="SDR_fam"/>
</dbReference>
<dbReference type="PANTHER" id="PTHR43180">
    <property type="entry name" value="3-OXOACYL-(ACYL-CARRIER-PROTEIN) REDUCTASE (AFU_ORTHOLOGUE AFUA_6G11210)"/>
    <property type="match status" value="1"/>
</dbReference>
<dbReference type="PANTHER" id="PTHR43180:SF28">
    <property type="entry name" value="NAD(P)-BINDING ROSSMANN-FOLD SUPERFAMILY PROTEIN"/>
    <property type="match status" value="1"/>
</dbReference>
<dbReference type="Pfam" id="PF13561">
    <property type="entry name" value="adh_short_C2"/>
    <property type="match status" value="1"/>
</dbReference>
<dbReference type="PRINTS" id="PR00081">
    <property type="entry name" value="GDHRDH"/>
</dbReference>
<dbReference type="PRINTS" id="PR00080">
    <property type="entry name" value="SDRFAMILY"/>
</dbReference>
<dbReference type="SUPFAM" id="SSF51735">
    <property type="entry name" value="NAD(P)-binding Rossmann-fold domains"/>
    <property type="match status" value="1"/>
</dbReference>
<dbReference type="PROSITE" id="PS00061">
    <property type="entry name" value="ADH_SHORT"/>
    <property type="match status" value="1"/>
</dbReference>
<sequence length="260" mass="27000">MSGRLIGKVALVSGGARGMGASHVRAMVAEGAKVVFGDILDEEGKAVAAELADAARYVHLDVTQPAQWTAAVDTAVTAFGGLHVLVNNAGILNIGTIEDYALTEWQRILDVNLTGVFLGIRAVVKPMKEAGRGSIINISSIEGLAGTVACHGYTATKFAVRGLTKSTALELGPGGIRVNSIHPGLVKTPMTDWVPEDIFQTALGRAAEPVEVSNLVVYLASDESSYSTGAEFVVDGGTVAGLAHNDFGAVEVSSQPEWVT</sequence>
<comment type="function">
    <text evidence="1">Probably involved in steroid metabolism.</text>
</comment>
<comment type="catalytic activity">
    <reaction evidence="1">
        <text>androstan-3alpha,17beta-diol + NAD(+) = 17beta-hydroxyandrostanone + NADH + H(+)</text>
        <dbReference type="Rhea" id="RHEA:22400"/>
        <dbReference type="ChEBI" id="CHEBI:15378"/>
        <dbReference type="ChEBI" id="CHEBI:18011"/>
        <dbReference type="ChEBI" id="CHEBI:57540"/>
        <dbReference type="ChEBI" id="CHEBI:57945"/>
        <dbReference type="ChEBI" id="CHEBI:85278"/>
        <dbReference type="EC" id="1.1.1.53"/>
    </reaction>
</comment>
<comment type="pathway">
    <text evidence="1">Lipid metabolism; steroid degradation.</text>
</comment>
<comment type="subunit">
    <text evidence="1">Homotetramer.</text>
</comment>
<comment type="similarity">
    <text evidence="2">Belongs to the short-chain dehydrogenases/reductases (SDR) family.</text>
</comment>
<protein>
    <recommendedName>
        <fullName evidence="1">3-alpha-(or 20-beta)-hydroxysteroid dehydrogenase</fullName>
        <ecNumber evidence="1">1.1.1.53</ecNumber>
    </recommendedName>
</protein>
<feature type="chain" id="PRO_0000428308" description="3-alpha-(or 20-beta)-hydroxysteroid dehydrogenase">
    <location>
        <begin position="1"/>
        <end position="260"/>
    </location>
</feature>
<feature type="active site" description="Proton acceptor" evidence="1">
    <location>
        <position position="153"/>
    </location>
</feature>
<feature type="binding site" evidence="1">
    <location>
        <position position="17"/>
    </location>
    <ligand>
        <name>NAD(+)</name>
        <dbReference type="ChEBI" id="CHEBI:57540"/>
    </ligand>
</feature>
<feature type="binding site" evidence="1">
    <location>
        <position position="19"/>
    </location>
    <ligand>
        <name>NAD(+)</name>
        <dbReference type="ChEBI" id="CHEBI:57540"/>
    </ligand>
</feature>
<feature type="binding site" evidence="1">
    <location>
        <position position="38"/>
    </location>
    <ligand>
        <name>NAD(+)</name>
        <dbReference type="ChEBI" id="CHEBI:57540"/>
    </ligand>
</feature>
<feature type="binding site" evidence="1">
    <location>
        <position position="61"/>
    </location>
    <ligand>
        <name>NAD(+)</name>
        <dbReference type="ChEBI" id="CHEBI:57540"/>
    </ligand>
</feature>
<feature type="binding site" evidence="1">
    <location>
        <position position="62"/>
    </location>
    <ligand>
        <name>NAD(+)</name>
        <dbReference type="ChEBI" id="CHEBI:57540"/>
    </ligand>
</feature>
<feature type="binding site" evidence="1">
    <location>
        <position position="88"/>
    </location>
    <ligand>
        <name>NAD(+)</name>
        <dbReference type="ChEBI" id="CHEBI:57540"/>
    </ligand>
</feature>
<feature type="binding site" evidence="1">
    <location>
        <position position="153"/>
    </location>
    <ligand>
        <name>NAD(+)</name>
        <dbReference type="ChEBI" id="CHEBI:57540"/>
    </ligand>
</feature>
<feature type="binding site" evidence="1">
    <location>
        <position position="157"/>
    </location>
    <ligand>
        <name>NAD(+)</name>
        <dbReference type="ChEBI" id="CHEBI:57540"/>
    </ligand>
</feature>
<feature type="binding site" evidence="1">
    <location>
        <position position="186"/>
    </location>
    <ligand>
        <name>NAD(+)</name>
        <dbReference type="ChEBI" id="CHEBI:57540"/>
    </ligand>
</feature>
<feature type="binding site" evidence="1">
    <location>
        <position position="188"/>
    </location>
    <ligand>
        <name>NAD(+)</name>
        <dbReference type="ChEBI" id="CHEBI:57540"/>
    </ligand>
</feature>
<feature type="binding site" evidence="1">
    <location>
        <position position="191"/>
    </location>
    <ligand>
        <name>NAD(+)</name>
        <dbReference type="ChEBI" id="CHEBI:57540"/>
    </ligand>
</feature>
<name>HSD_MYCTO</name>
<gene>
    <name type="primary">fabG3</name>
    <name type="ordered locus">MT2058</name>
</gene>
<evidence type="ECO:0000250" key="1">
    <source>
        <dbReference type="UniProtKB" id="P9WGT1"/>
    </source>
</evidence>
<evidence type="ECO:0000305" key="2"/>
<keyword id="KW-0443">Lipid metabolism</keyword>
<keyword id="KW-0520">NAD</keyword>
<keyword id="KW-0560">Oxidoreductase</keyword>
<keyword id="KW-1185">Reference proteome</keyword>
<keyword id="KW-0753">Steroid metabolism</keyword>
<organism>
    <name type="scientific">Mycobacterium tuberculosis (strain CDC 1551 / Oshkosh)</name>
    <dbReference type="NCBI Taxonomy" id="83331"/>
    <lineage>
        <taxon>Bacteria</taxon>
        <taxon>Bacillati</taxon>
        <taxon>Actinomycetota</taxon>
        <taxon>Actinomycetes</taxon>
        <taxon>Mycobacteriales</taxon>
        <taxon>Mycobacteriaceae</taxon>
        <taxon>Mycobacterium</taxon>
        <taxon>Mycobacterium tuberculosis complex</taxon>
    </lineage>
</organism>
<proteinExistence type="inferred from homology"/>